<organism>
    <name type="scientific">Dictyostelium discoideum</name>
    <name type="common">Social amoeba</name>
    <dbReference type="NCBI Taxonomy" id="44689"/>
    <lineage>
        <taxon>Eukaryota</taxon>
        <taxon>Amoebozoa</taxon>
        <taxon>Evosea</taxon>
        <taxon>Eumycetozoa</taxon>
        <taxon>Dictyostelia</taxon>
        <taxon>Dictyosteliales</taxon>
        <taxon>Dictyosteliaceae</taxon>
        <taxon>Dictyostelium</taxon>
    </lineage>
</organism>
<protein>
    <recommendedName>
        <fullName>Putative uncharacterized protein DDB_G0295823</fullName>
    </recommendedName>
</protein>
<feature type="chain" id="PRO_0000343637" description="Putative uncharacterized protein DDB_G0295823">
    <location>
        <begin position="1"/>
        <end position="36"/>
    </location>
</feature>
<feature type="region of interest" description="Disordered" evidence="1">
    <location>
        <begin position="1"/>
        <end position="36"/>
    </location>
</feature>
<feature type="compositionally biased region" description="Polar residues" evidence="1">
    <location>
        <begin position="1"/>
        <end position="14"/>
    </location>
</feature>
<feature type="compositionally biased region" description="Low complexity" evidence="1">
    <location>
        <begin position="15"/>
        <end position="36"/>
    </location>
</feature>
<name>Y6642_DICDI</name>
<proteinExistence type="predicted"/>
<dbReference type="EMBL" id="AAFI02000079">
    <property type="protein sequence ID" value="EEU04082.1"/>
    <property type="molecule type" value="Genomic_DNA"/>
</dbReference>
<dbReference type="EMBL" id="AU270498">
    <property type="status" value="NOT_ANNOTATED_CDS"/>
    <property type="molecule type" value="mRNA"/>
</dbReference>
<dbReference type="RefSeq" id="XP_002649134.1">
    <property type="nucleotide sequence ID" value="XM_002649088.1"/>
</dbReference>
<dbReference type="STRING" id="44689.P0C7T1"/>
<dbReference type="PaxDb" id="44689-DDB0266642"/>
<dbReference type="EnsemblProtists" id="EEU04082">
    <property type="protein sequence ID" value="EEU04082"/>
    <property type="gene ID" value="DDB_G0295823"/>
</dbReference>
<dbReference type="GeneID" id="8625250"/>
<dbReference type="KEGG" id="ddi:DDB_G0295823"/>
<dbReference type="dictyBase" id="DDB_G0295823"/>
<dbReference type="HOGENOM" id="CLU_3360758_0_0_1"/>
<dbReference type="InParanoid" id="P0C7T1"/>
<dbReference type="PRO" id="PR:P0C7T1"/>
<dbReference type="Proteomes" id="UP000002195">
    <property type="component" value="Chromosome 4"/>
</dbReference>
<gene>
    <name type="ORF">DDB_G0295823</name>
</gene>
<keyword id="KW-1185">Reference proteome</keyword>
<accession>P0C7T1</accession>
<accession>C7G040</accession>
<sequence length="36" mass="3607">MNQLGSGPTKQGVATNTGSTGTTKNNSNLSGKGWVL</sequence>
<reference key="1">
    <citation type="journal article" date="2005" name="Nature">
        <title>The genome of the social amoeba Dictyostelium discoideum.</title>
        <authorList>
            <person name="Eichinger L."/>
            <person name="Pachebat J.A."/>
            <person name="Gloeckner G."/>
            <person name="Rajandream M.A."/>
            <person name="Sucgang R."/>
            <person name="Berriman M."/>
            <person name="Song J."/>
            <person name="Olsen R."/>
            <person name="Szafranski K."/>
            <person name="Xu Q."/>
            <person name="Tunggal B."/>
            <person name="Kummerfeld S."/>
            <person name="Madera M."/>
            <person name="Konfortov B.A."/>
            <person name="Rivero F."/>
            <person name="Bankier A.T."/>
            <person name="Lehmann R."/>
            <person name="Hamlin N."/>
            <person name="Davies R."/>
            <person name="Gaudet P."/>
            <person name="Fey P."/>
            <person name="Pilcher K."/>
            <person name="Chen G."/>
            <person name="Saunders D."/>
            <person name="Sodergren E.J."/>
            <person name="Davis P."/>
            <person name="Kerhornou A."/>
            <person name="Nie X."/>
            <person name="Hall N."/>
            <person name="Anjard C."/>
            <person name="Hemphill L."/>
            <person name="Bason N."/>
            <person name="Farbrother P."/>
            <person name="Desany B."/>
            <person name="Just E."/>
            <person name="Morio T."/>
            <person name="Rost R."/>
            <person name="Churcher C.M."/>
            <person name="Cooper J."/>
            <person name="Haydock S."/>
            <person name="van Driessche N."/>
            <person name="Cronin A."/>
            <person name="Goodhead I."/>
            <person name="Muzny D.M."/>
            <person name="Mourier T."/>
            <person name="Pain A."/>
            <person name="Lu M."/>
            <person name="Harper D."/>
            <person name="Lindsay R."/>
            <person name="Hauser H."/>
            <person name="James K.D."/>
            <person name="Quiles M."/>
            <person name="Madan Babu M."/>
            <person name="Saito T."/>
            <person name="Buchrieser C."/>
            <person name="Wardroper A."/>
            <person name="Felder M."/>
            <person name="Thangavelu M."/>
            <person name="Johnson D."/>
            <person name="Knights A."/>
            <person name="Loulseged H."/>
            <person name="Mungall K.L."/>
            <person name="Oliver K."/>
            <person name="Price C."/>
            <person name="Quail M.A."/>
            <person name="Urushihara H."/>
            <person name="Hernandez J."/>
            <person name="Rabbinowitsch E."/>
            <person name="Steffen D."/>
            <person name="Sanders M."/>
            <person name="Ma J."/>
            <person name="Kohara Y."/>
            <person name="Sharp S."/>
            <person name="Simmonds M.N."/>
            <person name="Spiegler S."/>
            <person name="Tivey A."/>
            <person name="Sugano S."/>
            <person name="White B."/>
            <person name="Walker D."/>
            <person name="Woodward J.R."/>
            <person name="Winckler T."/>
            <person name="Tanaka Y."/>
            <person name="Shaulsky G."/>
            <person name="Schleicher M."/>
            <person name="Weinstock G.M."/>
            <person name="Rosenthal A."/>
            <person name="Cox E.C."/>
            <person name="Chisholm R.L."/>
            <person name="Gibbs R.A."/>
            <person name="Loomis W.F."/>
            <person name="Platzer M."/>
            <person name="Kay R.R."/>
            <person name="Williams J.G."/>
            <person name="Dear P.H."/>
            <person name="Noegel A.A."/>
            <person name="Barrell B.G."/>
            <person name="Kuspa A."/>
        </authorList>
    </citation>
    <scope>NUCLEOTIDE SEQUENCE [LARGE SCALE GENOMIC DNA]</scope>
    <source>
        <strain>AX4</strain>
    </source>
</reference>
<reference key="2">
    <citation type="journal article" date="2004" name="Nucleic Acids Res.">
        <title>Analyses of cDNAs from growth and slug stages of Dictyostelium discoideum.</title>
        <authorList>
            <person name="Urushihara H."/>
            <person name="Morio T."/>
            <person name="Saito T."/>
            <person name="Kohara Y."/>
            <person name="Koriki E."/>
            <person name="Ochiai H."/>
            <person name="Maeda M."/>
            <person name="Williams J.G."/>
            <person name="Takeuchi I."/>
            <person name="Tanaka Y."/>
        </authorList>
    </citation>
    <scope>NUCLEOTIDE SEQUENCE [LARGE SCALE MRNA]</scope>
    <source>
        <strain>AX4</strain>
    </source>
</reference>
<evidence type="ECO:0000256" key="1">
    <source>
        <dbReference type="SAM" id="MobiDB-lite"/>
    </source>
</evidence>